<reference key="1">
    <citation type="journal article" date="1997" name="Mamm. Genome">
        <title>The gene encoding the heart/muscle isoform of cytochrome c oxidase subunit VIII maps to mouse chromosome 7.</title>
        <authorList>
            <person name="Makris G.J."/>
            <person name="Lomax M.I."/>
        </authorList>
    </citation>
    <scope>NUCLEOTIDE SEQUENCE [MRNA]</scope>
    <source>
        <strain>C57BL/6 X CBA</strain>
        <tissue>Liver</tissue>
    </source>
</reference>
<reference key="2">
    <citation type="journal article" date="2005" name="Science">
        <title>The transcriptional landscape of the mammalian genome.</title>
        <authorList>
            <person name="Carninci P."/>
            <person name="Kasukawa T."/>
            <person name="Katayama S."/>
            <person name="Gough J."/>
            <person name="Frith M.C."/>
            <person name="Maeda N."/>
            <person name="Oyama R."/>
            <person name="Ravasi T."/>
            <person name="Lenhard B."/>
            <person name="Wells C."/>
            <person name="Kodzius R."/>
            <person name="Shimokawa K."/>
            <person name="Bajic V.B."/>
            <person name="Brenner S.E."/>
            <person name="Batalov S."/>
            <person name="Forrest A.R."/>
            <person name="Zavolan M."/>
            <person name="Davis M.J."/>
            <person name="Wilming L.G."/>
            <person name="Aidinis V."/>
            <person name="Allen J.E."/>
            <person name="Ambesi-Impiombato A."/>
            <person name="Apweiler R."/>
            <person name="Aturaliya R.N."/>
            <person name="Bailey T.L."/>
            <person name="Bansal M."/>
            <person name="Baxter L."/>
            <person name="Beisel K.W."/>
            <person name="Bersano T."/>
            <person name="Bono H."/>
            <person name="Chalk A.M."/>
            <person name="Chiu K.P."/>
            <person name="Choudhary V."/>
            <person name="Christoffels A."/>
            <person name="Clutterbuck D.R."/>
            <person name="Crowe M.L."/>
            <person name="Dalla E."/>
            <person name="Dalrymple B.P."/>
            <person name="de Bono B."/>
            <person name="Della Gatta G."/>
            <person name="di Bernardo D."/>
            <person name="Down T."/>
            <person name="Engstrom P."/>
            <person name="Fagiolini M."/>
            <person name="Faulkner G."/>
            <person name="Fletcher C.F."/>
            <person name="Fukushima T."/>
            <person name="Furuno M."/>
            <person name="Futaki S."/>
            <person name="Gariboldi M."/>
            <person name="Georgii-Hemming P."/>
            <person name="Gingeras T.R."/>
            <person name="Gojobori T."/>
            <person name="Green R.E."/>
            <person name="Gustincich S."/>
            <person name="Harbers M."/>
            <person name="Hayashi Y."/>
            <person name="Hensch T.K."/>
            <person name="Hirokawa N."/>
            <person name="Hill D."/>
            <person name="Huminiecki L."/>
            <person name="Iacono M."/>
            <person name="Ikeo K."/>
            <person name="Iwama A."/>
            <person name="Ishikawa T."/>
            <person name="Jakt M."/>
            <person name="Kanapin A."/>
            <person name="Katoh M."/>
            <person name="Kawasawa Y."/>
            <person name="Kelso J."/>
            <person name="Kitamura H."/>
            <person name="Kitano H."/>
            <person name="Kollias G."/>
            <person name="Krishnan S.P."/>
            <person name="Kruger A."/>
            <person name="Kummerfeld S.K."/>
            <person name="Kurochkin I.V."/>
            <person name="Lareau L.F."/>
            <person name="Lazarevic D."/>
            <person name="Lipovich L."/>
            <person name="Liu J."/>
            <person name="Liuni S."/>
            <person name="McWilliam S."/>
            <person name="Madan Babu M."/>
            <person name="Madera M."/>
            <person name="Marchionni L."/>
            <person name="Matsuda H."/>
            <person name="Matsuzawa S."/>
            <person name="Miki H."/>
            <person name="Mignone F."/>
            <person name="Miyake S."/>
            <person name="Morris K."/>
            <person name="Mottagui-Tabar S."/>
            <person name="Mulder N."/>
            <person name="Nakano N."/>
            <person name="Nakauchi H."/>
            <person name="Ng P."/>
            <person name="Nilsson R."/>
            <person name="Nishiguchi S."/>
            <person name="Nishikawa S."/>
            <person name="Nori F."/>
            <person name="Ohara O."/>
            <person name="Okazaki Y."/>
            <person name="Orlando V."/>
            <person name="Pang K.C."/>
            <person name="Pavan W.J."/>
            <person name="Pavesi G."/>
            <person name="Pesole G."/>
            <person name="Petrovsky N."/>
            <person name="Piazza S."/>
            <person name="Reed J."/>
            <person name="Reid J.F."/>
            <person name="Ring B.Z."/>
            <person name="Ringwald M."/>
            <person name="Rost B."/>
            <person name="Ruan Y."/>
            <person name="Salzberg S.L."/>
            <person name="Sandelin A."/>
            <person name="Schneider C."/>
            <person name="Schoenbach C."/>
            <person name="Sekiguchi K."/>
            <person name="Semple C.A."/>
            <person name="Seno S."/>
            <person name="Sessa L."/>
            <person name="Sheng Y."/>
            <person name="Shibata Y."/>
            <person name="Shimada H."/>
            <person name="Shimada K."/>
            <person name="Silva D."/>
            <person name="Sinclair B."/>
            <person name="Sperling S."/>
            <person name="Stupka E."/>
            <person name="Sugiura K."/>
            <person name="Sultana R."/>
            <person name="Takenaka Y."/>
            <person name="Taki K."/>
            <person name="Tammoja K."/>
            <person name="Tan S.L."/>
            <person name="Tang S."/>
            <person name="Taylor M.S."/>
            <person name="Tegner J."/>
            <person name="Teichmann S.A."/>
            <person name="Ueda H.R."/>
            <person name="van Nimwegen E."/>
            <person name="Verardo R."/>
            <person name="Wei C.L."/>
            <person name="Yagi K."/>
            <person name="Yamanishi H."/>
            <person name="Zabarovsky E."/>
            <person name="Zhu S."/>
            <person name="Zimmer A."/>
            <person name="Hide W."/>
            <person name="Bult C."/>
            <person name="Grimmond S.M."/>
            <person name="Teasdale R.D."/>
            <person name="Liu E.T."/>
            <person name="Brusic V."/>
            <person name="Quackenbush J."/>
            <person name="Wahlestedt C."/>
            <person name="Mattick J.S."/>
            <person name="Hume D.A."/>
            <person name="Kai C."/>
            <person name="Sasaki D."/>
            <person name="Tomaru Y."/>
            <person name="Fukuda S."/>
            <person name="Kanamori-Katayama M."/>
            <person name="Suzuki M."/>
            <person name="Aoki J."/>
            <person name="Arakawa T."/>
            <person name="Iida J."/>
            <person name="Imamura K."/>
            <person name="Itoh M."/>
            <person name="Kato T."/>
            <person name="Kawaji H."/>
            <person name="Kawagashira N."/>
            <person name="Kawashima T."/>
            <person name="Kojima M."/>
            <person name="Kondo S."/>
            <person name="Konno H."/>
            <person name="Nakano K."/>
            <person name="Ninomiya N."/>
            <person name="Nishio T."/>
            <person name="Okada M."/>
            <person name="Plessy C."/>
            <person name="Shibata K."/>
            <person name="Shiraki T."/>
            <person name="Suzuki S."/>
            <person name="Tagami M."/>
            <person name="Waki K."/>
            <person name="Watahiki A."/>
            <person name="Okamura-Oho Y."/>
            <person name="Suzuki H."/>
            <person name="Kawai J."/>
            <person name="Hayashizaki Y."/>
        </authorList>
    </citation>
    <scope>NUCLEOTIDE SEQUENCE [LARGE SCALE MRNA]</scope>
    <source>
        <strain>C57BL/6J</strain>
        <tissue>Kidney</tissue>
        <tissue>Small intestine</tissue>
    </source>
</reference>
<reference key="3">
    <citation type="journal article" date="2004" name="Genome Res.">
        <title>The status, quality, and expansion of the NIH full-length cDNA project: the Mammalian Gene Collection (MGC).</title>
        <authorList>
            <consortium name="The MGC Project Team"/>
        </authorList>
    </citation>
    <scope>NUCLEOTIDE SEQUENCE [LARGE SCALE MRNA]</scope>
    <source>
        <tissue>Brain</tissue>
    </source>
</reference>
<accession>Q64445</accession>
<accession>Q0VBB1</accession>
<accession>Q545I2</accession>
<organism>
    <name type="scientific">Mus musculus</name>
    <name type="common">Mouse</name>
    <dbReference type="NCBI Taxonomy" id="10090"/>
    <lineage>
        <taxon>Eukaryota</taxon>
        <taxon>Metazoa</taxon>
        <taxon>Chordata</taxon>
        <taxon>Craniata</taxon>
        <taxon>Vertebrata</taxon>
        <taxon>Euteleostomi</taxon>
        <taxon>Mammalia</taxon>
        <taxon>Eutheria</taxon>
        <taxon>Euarchontoglires</taxon>
        <taxon>Glires</taxon>
        <taxon>Rodentia</taxon>
        <taxon>Myomorpha</taxon>
        <taxon>Muroidea</taxon>
        <taxon>Muridae</taxon>
        <taxon>Murinae</taxon>
        <taxon>Mus</taxon>
        <taxon>Mus</taxon>
    </lineage>
</organism>
<name>COX8A_MOUSE</name>
<sequence length="69" mass="7648">MSVLTPLLLRSLTGSARRLMVPRAQVHSKPAREQLGVLDITIGLTSCFVCCLLPAGWVLSHLESYKKRE</sequence>
<comment type="function">
    <text evidence="1">Component of the cytochrome c oxidase, the last enzyme in the mitochondrial electron transport chain which drives oxidative phosphorylation. The respiratory chain contains 3 multisubunit complexes succinate dehydrogenase (complex II, CII), ubiquinol-cytochrome c oxidoreductase (cytochrome b-c1 complex, complex III, CIII) and cytochrome c oxidase (complex IV, CIV), that cooperate to transfer electrons derived from NADH and succinate to molecular oxygen, creating an electrochemical gradient over the inner membrane that drives transmembrane transport and the ATP synthase. Cytochrome c oxidase is the component of the respiratory chain that catalyzes the reduction of oxygen to water. Electrons originating from reduced cytochrome c in the intermembrane space (IMS) are transferred via the dinuclear copper A center (CU(A)) of subunit 2 and heme A of subunit 1 to the active site in subunit 1, a binuclear center (BNC) formed by heme A3 and copper B (CU(B)). The BNC reduces molecular oxygen to 2 water molecules using 4 electrons from cytochrome c in the IMS and 4 protons from the mitochondrial matrix.</text>
</comment>
<comment type="pathway">
    <text evidence="1">Energy metabolism; oxidative phosphorylation.</text>
</comment>
<comment type="subunit">
    <text evidence="2">Component of the cytochrome c oxidase (complex IV, CIV), a multisubunit enzyme composed of 14 subunits. The complex is composed of a catalytic core of 3 subunits MT-CO1, MT-CO2 and MT-CO3, encoded in the mitochondrial DNA, and 11 supernumerary subunits COX4I, COX5A, COX5B, COX6A, COX6B, COX6C, COX7A, COX7B, COX7C, COX8 and NDUFA4, which are encoded in the nuclear genome. The complex exists as a monomer or a dimer and forms supercomplexes (SCs) in the inner mitochondrial membrane with NADH-ubiquinone oxidoreductase (complex I, CI) and ubiquinol-cytochrome c oxidoreductase (cytochrome b-c1 complex, complex III, CIII), resulting in different assemblies (supercomplex SCI(1)III(2)IV(1) and megacomplex MCI(2)III(2)IV(2)).</text>
</comment>
<comment type="subcellular location">
    <subcellularLocation>
        <location evidence="2">Mitochondrion inner membrane</location>
        <topology evidence="2">Single-pass membrane protein</topology>
    </subcellularLocation>
</comment>
<comment type="PTM">
    <text evidence="2">In response to mitochondrial stress, the precursor protein is ubiquitinated by the SIFI complex in the cytoplasm before mitochondrial import, leading to its degradation. Within the SIFI complex, UBR4 initiates ubiquitin chain that are further elongated or branched by KCMF1.</text>
</comment>
<comment type="similarity">
    <text evidence="3">Belongs to the cytochrome c oxidase VIII family.</text>
</comment>
<evidence type="ECO:0000250" key="1">
    <source>
        <dbReference type="UniProtKB" id="P10175"/>
    </source>
</evidence>
<evidence type="ECO:0000250" key="2">
    <source>
        <dbReference type="UniProtKB" id="P10176"/>
    </source>
</evidence>
<evidence type="ECO:0000305" key="3"/>
<dbReference type="EMBL" id="U37721">
    <property type="protein sequence ID" value="AAB38754.1"/>
    <property type="molecule type" value="mRNA"/>
</dbReference>
<dbReference type="EMBL" id="AK002218">
    <property type="protein sequence ID" value="BAB21942.1"/>
    <property type="molecule type" value="mRNA"/>
</dbReference>
<dbReference type="EMBL" id="AK002524">
    <property type="protein sequence ID" value="BAB22161.1"/>
    <property type="molecule type" value="mRNA"/>
</dbReference>
<dbReference type="EMBL" id="AK008594">
    <property type="protein sequence ID" value="BAB25767.1"/>
    <property type="molecule type" value="mRNA"/>
</dbReference>
<dbReference type="EMBL" id="BC120708">
    <property type="protein sequence ID" value="AAI20709.1"/>
    <property type="molecule type" value="mRNA"/>
</dbReference>
<dbReference type="EMBL" id="BC120710">
    <property type="protein sequence ID" value="AAI20711.1"/>
    <property type="molecule type" value="mRNA"/>
</dbReference>
<dbReference type="CCDS" id="CCDS29521.1"/>
<dbReference type="PIR" id="S71929">
    <property type="entry name" value="S71929"/>
</dbReference>
<dbReference type="RefSeq" id="NP_031776.1">
    <property type="nucleotide sequence ID" value="NM_007750.2"/>
</dbReference>
<dbReference type="EMDB" id="EMD-17989"/>
<dbReference type="EMDB" id="EMD-17990"/>
<dbReference type="EMDB" id="EMD-17991"/>
<dbReference type="SMR" id="Q64445"/>
<dbReference type="CORUM" id="Q64445"/>
<dbReference type="FunCoup" id="Q64445">
    <property type="interactions" value="248"/>
</dbReference>
<dbReference type="STRING" id="10090.ENSMUSP00000040717"/>
<dbReference type="iPTMnet" id="Q64445"/>
<dbReference type="PhosphoSitePlus" id="Q64445"/>
<dbReference type="PaxDb" id="10090-ENSMUSP00000040717"/>
<dbReference type="PeptideAtlas" id="Q64445"/>
<dbReference type="ProteomicsDB" id="283798"/>
<dbReference type="TopDownProteomics" id="Q64445"/>
<dbReference type="Antibodypedia" id="43917">
    <property type="antibodies" value="86 antibodies from 23 providers"/>
</dbReference>
<dbReference type="DNASU" id="12868"/>
<dbReference type="Ensembl" id="ENSMUST00000039758.6">
    <property type="protein sequence ID" value="ENSMUSP00000040717.5"/>
    <property type="gene ID" value="ENSMUSG00000035885.6"/>
</dbReference>
<dbReference type="GeneID" id="12868"/>
<dbReference type="KEGG" id="mmu:12868"/>
<dbReference type="UCSC" id="uc008gkj.1">
    <property type="organism name" value="mouse"/>
</dbReference>
<dbReference type="AGR" id="MGI:105959"/>
<dbReference type="CTD" id="1351"/>
<dbReference type="MGI" id="MGI:105959">
    <property type="gene designation" value="Cox8a"/>
</dbReference>
<dbReference type="VEuPathDB" id="HostDB:ENSMUSG00000035885"/>
<dbReference type="eggNOG" id="ENOG502SA62">
    <property type="taxonomic scope" value="Eukaryota"/>
</dbReference>
<dbReference type="GeneTree" id="ENSGT00390000006255"/>
<dbReference type="HOGENOM" id="CLU_203368_0_0_1"/>
<dbReference type="InParanoid" id="Q64445"/>
<dbReference type="OMA" id="AQVHSMP"/>
<dbReference type="OrthoDB" id="8931496at2759"/>
<dbReference type="PhylomeDB" id="Q64445"/>
<dbReference type="TreeFam" id="TF105070"/>
<dbReference type="Reactome" id="R-MMU-5628897">
    <property type="pathway name" value="TP53 Regulates Metabolic Genes"/>
</dbReference>
<dbReference type="Reactome" id="R-MMU-611105">
    <property type="pathway name" value="Respiratory electron transport"/>
</dbReference>
<dbReference type="Reactome" id="R-MMU-9707564">
    <property type="pathway name" value="Cytoprotection by HMOX1"/>
</dbReference>
<dbReference type="Reactome" id="R-MMU-9864848">
    <property type="pathway name" value="Complex IV assembly"/>
</dbReference>
<dbReference type="UniPathway" id="UPA00705"/>
<dbReference type="BioGRID-ORCS" id="12868">
    <property type="hits" value="10 hits in 78 CRISPR screens"/>
</dbReference>
<dbReference type="ChiTaRS" id="Cox8a">
    <property type="organism name" value="mouse"/>
</dbReference>
<dbReference type="PRO" id="PR:Q64445"/>
<dbReference type="Proteomes" id="UP000000589">
    <property type="component" value="Chromosome 19"/>
</dbReference>
<dbReference type="RNAct" id="Q64445">
    <property type="molecule type" value="protein"/>
</dbReference>
<dbReference type="Bgee" id="ENSMUSG00000035885">
    <property type="expression patterns" value="Expressed in right kidney and 248 other cell types or tissues"/>
</dbReference>
<dbReference type="ExpressionAtlas" id="Q64445">
    <property type="expression patterns" value="baseline and differential"/>
</dbReference>
<dbReference type="GO" id="GO:0005743">
    <property type="term" value="C:mitochondrial inner membrane"/>
    <property type="evidence" value="ECO:0007669"/>
    <property type="project" value="UniProtKB-SubCell"/>
</dbReference>
<dbReference type="GO" id="GO:0005739">
    <property type="term" value="C:mitochondrion"/>
    <property type="evidence" value="ECO:0007005"/>
    <property type="project" value="MGI"/>
</dbReference>
<dbReference type="GO" id="GO:0045277">
    <property type="term" value="C:respiratory chain complex IV"/>
    <property type="evidence" value="ECO:0007669"/>
    <property type="project" value="InterPro"/>
</dbReference>
<dbReference type="GO" id="GO:0006123">
    <property type="term" value="P:mitochondrial electron transport, cytochrome c to oxygen"/>
    <property type="evidence" value="ECO:0007669"/>
    <property type="project" value="InterPro"/>
</dbReference>
<dbReference type="CDD" id="cd00930">
    <property type="entry name" value="Cyt_c_Oxidase_VIII"/>
    <property type="match status" value="1"/>
</dbReference>
<dbReference type="FunFam" id="4.10.81.10:FF:000001">
    <property type="entry name" value="Cytochrome c oxidase subunit 8B, mitochondrial"/>
    <property type="match status" value="1"/>
</dbReference>
<dbReference type="Gene3D" id="4.10.81.10">
    <property type="entry name" value="Cytochrome c oxidase, subunit 8"/>
    <property type="match status" value="1"/>
</dbReference>
<dbReference type="InterPro" id="IPR003205">
    <property type="entry name" value="Cyt_c_oxidase_su8"/>
</dbReference>
<dbReference type="InterPro" id="IPR036548">
    <property type="entry name" value="Cyt_c_oxidase_su8_sf"/>
</dbReference>
<dbReference type="PANTHER" id="PTHR16717">
    <property type="entry name" value="CYTOCHROME C OXIDASE POLYPEPTIDE VIII"/>
    <property type="match status" value="1"/>
</dbReference>
<dbReference type="PANTHER" id="PTHR16717:SF1">
    <property type="entry name" value="CYTOCHROME C OXIDASE SUBUNIT 8A, MITOCHONDRIAL"/>
    <property type="match status" value="1"/>
</dbReference>
<dbReference type="Pfam" id="PF02285">
    <property type="entry name" value="COX8"/>
    <property type="match status" value="1"/>
</dbReference>
<dbReference type="SUPFAM" id="SSF81431">
    <property type="entry name" value="Mitochondrial cytochrome c oxidase subunit VIIIb (aka IX)"/>
    <property type="match status" value="1"/>
</dbReference>
<proteinExistence type="inferred from homology"/>
<gene>
    <name type="primary">Cox8a</name>
    <name type="synonym">Cox8</name>
    <name type="synonym">Cox8l</name>
</gene>
<protein>
    <recommendedName>
        <fullName>Cytochrome c oxidase subunit 8A, mitochondrial</fullName>
    </recommendedName>
    <alternativeName>
        <fullName>Cytochrome c oxidase polypeptide VIII-liver</fullName>
    </alternativeName>
    <alternativeName>
        <fullName>Cytochrome c oxidase subunit 8-2</fullName>
    </alternativeName>
</protein>
<keyword id="KW-0472">Membrane</keyword>
<keyword id="KW-0496">Mitochondrion</keyword>
<keyword id="KW-0999">Mitochondrion inner membrane</keyword>
<keyword id="KW-1185">Reference proteome</keyword>
<keyword id="KW-0809">Transit peptide</keyword>
<keyword id="KW-0812">Transmembrane</keyword>
<keyword id="KW-1133">Transmembrane helix</keyword>
<keyword id="KW-0832">Ubl conjugation</keyword>
<feature type="transit peptide" description="Mitochondrion" evidence="2">
    <location>
        <begin position="1"/>
        <end position="25"/>
    </location>
</feature>
<feature type="chain" id="PRO_0000006189" description="Cytochrome c oxidase subunit 8A, mitochondrial">
    <location>
        <begin position="26"/>
        <end position="69"/>
    </location>
</feature>
<feature type="topological domain" description="Mitochondrial matrix" evidence="2">
    <location>
        <begin position="26"/>
        <end position="36"/>
    </location>
</feature>
<feature type="transmembrane region" description="Helical" evidence="1">
    <location>
        <begin position="37"/>
        <end position="60"/>
    </location>
</feature>
<feature type="topological domain" description="Mitochondrial intermembrane" evidence="2">
    <location>
        <begin position="61"/>
        <end position="69"/>
    </location>
</feature>
<feature type="short sequence motif" description="SIFI-degron" evidence="2">
    <location>
        <begin position="2"/>
        <end position="19"/>
    </location>
</feature>